<sequence length="447" mass="49311">MNAWEVNFDGLVGLTHHYAGLSFGNEASTRHRFQVSNPRLAAKQGLLKMKTLADAGFPQAVIPPHERPFIPVLRQLGFSGSDEQVLEKVARQAPHWLSSVSSASPMWVANAATIAPSADTLDGKVHLTVANLNNKFHRSLEAPVTESLLKAIFNDEEKFSVHSALPQVALLGDEGAANHNRLGGHYGEPGMQLFVYGREEGNDTRPSRYPARQTREASEAVARLNQVNPQQVIFAQQNPDVIDQGVFHNDVIAVSNRQVLFCHQQAFARQVQLLANLRARVNGFMAIEVPATQVSVSDAVSTYLFNSQLLSRDDGSMMLVLPQECREHAGVWGYLNELLAADNPISELKVFDLRESMANGGGPACLRLRVVLTEEERQAVNPAVMMNDTLFNVLNDWVDRYYRDRLTAADLADPQLLREGREALDVLSQLLNLGSVYPFQREGGGNG</sequence>
<dbReference type="EC" id="3.5.3.23" evidence="1"/>
<dbReference type="EMBL" id="CU928163">
    <property type="protein sequence ID" value="CAR13230.1"/>
    <property type="molecule type" value="Genomic_DNA"/>
</dbReference>
<dbReference type="RefSeq" id="WP_000994992.1">
    <property type="nucleotide sequence ID" value="NC_011751.1"/>
</dbReference>
<dbReference type="RefSeq" id="YP_002412762.1">
    <property type="nucleotide sequence ID" value="NC_011751.1"/>
</dbReference>
<dbReference type="SMR" id="B7N581"/>
<dbReference type="STRING" id="585056.ECUMN_2034"/>
<dbReference type="KEGG" id="eum:ECUMN_2034"/>
<dbReference type="PATRIC" id="fig|585056.7.peg.2220"/>
<dbReference type="HOGENOM" id="CLU_053835_0_0_6"/>
<dbReference type="UniPathway" id="UPA00185">
    <property type="reaction ID" value="UER00280"/>
</dbReference>
<dbReference type="Proteomes" id="UP000007097">
    <property type="component" value="Chromosome"/>
</dbReference>
<dbReference type="GO" id="GO:0009015">
    <property type="term" value="F:N-succinylarginine dihydrolase activity"/>
    <property type="evidence" value="ECO:0007669"/>
    <property type="project" value="UniProtKB-UniRule"/>
</dbReference>
<dbReference type="GO" id="GO:0019544">
    <property type="term" value="P:arginine catabolic process to glutamate"/>
    <property type="evidence" value="ECO:0007669"/>
    <property type="project" value="UniProtKB-UniRule"/>
</dbReference>
<dbReference type="GO" id="GO:0019545">
    <property type="term" value="P:arginine catabolic process to succinate"/>
    <property type="evidence" value="ECO:0007669"/>
    <property type="project" value="UniProtKB-UniRule"/>
</dbReference>
<dbReference type="FunFam" id="3.75.10.20:FF:000001">
    <property type="entry name" value="N-succinylarginine dihydrolase"/>
    <property type="match status" value="1"/>
</dbReference>
<dbReference type="Gene3D" id="3.75.10.20">
    <property type="entry name" value="Succinylarginine dihydrolase"/>
    <property type="match status" value="1"/>
</dbReference>
<dbReference type="HAMAP" id="MF_01172">
    <property type="entry name" value="AstB"/>
    <property type="match status" value="1"/>
</dbReference>
<dbReference type="InterPro" id="IPR037031">
    <property type="entry name" value="AstB_sf"/>
</dbReference>
<dbReference type="InterPro" id="IPR007079">
    <property type="entry name" value="SuccinylArg_d-Hdrlase_AstB"/>
</dbReference>
<dbReference type="NCBIfam" id="TIGR03241">
    <property type="entry name" value="arg_catab_astB"/>
    <property type="match status" value="1"/>
</dbReference>
<dbReference type="NCBIfam" id="NF009789">
    <property type="entry name" value="PRK13281.1"/>
    <property type="match status" value="1"/>
</dbReference>
<dbReference type="PANTHER" id="PTHR30420">
    <property type="entry name" value="N-SUCCINYLARGININE DIHYDROLASE"/>
    <property type="match status" value="1"/>
</dbReference>
<dbReference type="PANTHER" id="PTHR30420:SF2">
    <property type="entry name" value="N-SUCCINYLARGININE DIHYDROLASE"/>
    <property type="match status" value="1"/>
</dbReference>
<dbReference type="Pfam" id="PF04996">
    <property type="entry name" value="AstB"/>
    <property type="match status" value="1"/>
</dbReference>
<dbReference type="SUPFAM" id="SSF55909">
    <property type="entry name" value="Pentein"/>
    <property type="match status" value="1"/>
</dbReference>
<proteinExistence type="inferred from homology"/>
<reference key="1">
    <citation type="journal article" date="2009" name="PLoS Genet.">
        <title>Organised genome dynamics in the Escherichia coli species results in highly diverse adaptive paths.</title>
        <authorList>
            <person name="Touchon M."/>
            <person name="Hoede C."/>
            <person name="Tenaillon O."/>
            <person name="Barbe V."/>
            <person name="Baeriswyl S."/>
            <person name="Bidet P."/>
            <person name="Bingen E."/>
            <person name="Bonacorsi S."/>
            <person name="Bouchier C."/>
            <person name="Bouvet O."/>
            <person name="Calteau A."/>
            <person name="Chiapello H."/>
            <person name="Clermont O."/>
            <person name="Cruveiller S."/>
            <person name="Danchin A."/>
            <person name="Diard M."/>
            <person name="Dossat C."/>
            <person name="Karoui M.E."/>
            <person name="Frapy E."/>
            <person name="Garry L."/>
            <person name="Ghigo J.M."/>
            <person name="Gilles A.M."/>
            <person name="Johnson J."/>
            <person name="Le Bouguenec C."/>
            <person name="Lescat M."/>
            <person name="Mangenot S."/>
            <person name="Martinez-Jehanne V."/>
            <person name="Matic I."/>
            <person name="Nassif X."/>
            <person name="Oztas S."/>
            <person name="Petit M.A."/>
            <person name="Pichon C."/>
            <person name="Rouy Z."/>
            <person name="Ruf C.S."/>
            <person name="Schneider D."/>
            <person name="Tourret J."/>
            <person name="Vacherie B."/>
            <person name="Vallenet D."/>
            <person name="Medigue C."/>
            <person name="Rocha E.P.C."/>
            <person name="Denamur E."/>
        </authorList>
    </citation>
    <scope>NUCLEOTIDE SEQUENCE [LARGE SCALE GENOMIC DNA]</scope>
    <source>
        <strain>UMN026 / ExPEC</strain>
    </source>
</reference>
<gene>
    <name evidence="1" type="primary">astB</name>
    <name type="ordered locus">ECUMN_2034</name>
</gene>
<name>ASTB_ECOLU</name>
<keyword id="KW-0056">Arginine metabolism</keyword>
<keyword id="KW-0378">Hydrolase</keyword>
<evidence type="ECO:0000255" key="1">
    <source>
        <dbReference type="HAMAP-Rule" id="MF_01172"/>
    </source>
</evidence>
<feature type="chain" id="PRO_1000138014" description="N-succinylarginine dihydrolase">
    <location>
        <begin position="1"/>
        <end position="447"/>
    </location>
</feature>
<feature type="active site" evidence="1">
    <location>
        <position position="174"/>
    </location>
</feature>
<feature type="active site" evidence="1">
    <location>
        <position position="248"/>
    </location>
</feature>
<feature type="active site" description="Nucleophile" evidence="1">
    <location>
        <position position="365"/>
    </location>
</feature>
<feature type="binding site" evidence="1">
    <location>
        <begin position="19"/>
        <end position="28"/>
    </location>
    <ligand>
        <name>substrate</name>
    </ligand>
</feature>
<feature type="binding site" evidence="1">
    <location>
        <position position="110"/>
    </location>
    <ligand>
        <name>substrate</name>
    </ligand>
</feature>
<feature type="binding site" evidence="1">
    <location>
        <begin position="137"/>
        <end position="138"/>
    </location>
    <ligand>
        <name>substrate</name>
    </ligand>
</feature>
<feature type="binding site" evidence="1">
    <location>
        <position position="212"/>
    </location>
    <ligand>
        <name>substrate</name>
    </ligand>
</feature>
<feature type="binding site" evidence="1">
    <location>
        <position position="250"/>
    </location>
    <ligand>
        <name>substrate</name>
    </ligand>
</feature>
<feature type="binding site" evidence="1">
    <location>
        <position position="359"/>
    </location>
    <ligand>
        <name>substrate</name>
    </ligand>
</feature>
<comment type="function">
    <text evidence="1">Catalyzes the hydrolysis of N(2)-succinylarginine into N(2)-succinylornithine, ammonia and CO(2).</text>
</comment>
<comment type="catalytic activity">
    <reaction evidence="1">
        <text>N(2)-succinyl-L-arginine + 2 H2O + 2 H(+) = N(2)-succinyl-L-ornithine + 2 NH4(+) + CO2</text>
        <dbReference type="Rhea" id="RHEA:19533"/>
        <dbReference type="ChEBI" id="CHEBI:15377"/>
        <dbReference type="ChEBI" id="CHEBI:15378"/>
        <dbReference type="ChEBI" id="CHEBI:16526"/>
        <dbReference type="ChEBI" id="CHEBI:28938"/>
        <dbReference type="ChEBI" id="CHEBI:58241"/>
        <dbReference type="ChEBI" id="CHEBI:58514"/>
        <dbReference type="EC" id="3.5.3.23"/>
    </reaction>
</comment>
<comment type="pathway">
    <text evidence="1">Amino-acid degradation; L-arginine degradation via AST pathway; L-glutamate and succinate from L-arginine: step 2/5.</text>
</comment>
<comment type="subunit">
    <text evidence="1">Homodimer.</text>
</comment>
<comment type="similarity">
    <text evidence="1">Belongs to the succinylarginine dihydrolase family.</text>
</comment>
<protein>
    <recommendedName>
        <fullName evidence="1">N-succinylarginine dihydrolase</fullName>
        <ecNumber evidence="1">3.5.3.23</ecNumber>
    </recommendedName>
</protein>
<accession>B7N581</accession>
<organism>
    <name type="scientific">Escherichia coli O17:K52:H18 (strain UMN026 / ExPEC)</name>
    <dbReference type="NCBI Taxonomy" id="585056"/>
    <lineage>
        <taxon>Bacteria</taxon>
        <taxon>Pseudomonadati</taxon>
        <taxon>Pseudomonadota</taxon>
        <taxon>Gammaproteobacteria</taxon>
        <taxon>Enterobacterales</taxon>
        <taxon>Enterobacteriaceae</taxon>
        <taxon>Escherichia</taxon>
    </lineage>
</organism>